<organism>
    <name type="scientific">Mus musculus</name>
    <name type="common">Mouse</name>
    <dbReference type="NCBI Taxonomy" id="10090"/>
    <lineage>
        <taxon>Eukaryota</taxon>
        <taxon>Metazoa</taxon>
        <taxon>Chordata</taxon>
        <taxon>Craniata</taxon>
        <taxon>Vertebrata</taxon>
        <taxon>Euteleostomi</taxon>
        <taxon>Mammalia</taxon>
        <taxon>Eutheria</taxon>
        <taxon>Euarchontoglires</taxon>
        <taxon>Glires</taxon>
        <taxon>Rodentia</taxon>
        <taxon>Myomorpha</taxon>
        <taxon>Muroidea</taxon>
        <taxon>Muridae</taxon>
        <taxon>Murinae</taxon>
        <taxon>Mus</taxon>
        <taxon>Mus</taxon>
    </lineage>
</organism>
<gene>
    <name type="primary">Aga</name>
</gene>
<comment type="function">
    <text evidence="3">Cleaves the GlcNAc-Asn bond which joins oligosaccharides to the peptide of asparagine-linked glycoproteins.</text>
</comment>
<comment type="catalytic activity">
    <reaction evidence="3">
        <text>N(4)-(beta-N-acetyl-D-glucosaminyl)-L-asparagine + H2O = N-acetyl-beta-D-glucosaminylamine + L-aspartate + H(+)</text>
        <dbReference type="Rhea" id="RHEA:11544"/>
        <dbReference type="ChEBI" id="CHEBI:15377"/>
        <dbReference type="ChEBI" id="CHEBI:15378"/>
        <dbReference type="ChEBI" id="CHEBI:15947"/>
        <dbReference type="ChEBI" id="CHEBI:29991"/>
        <dbReference type="ChEBI" id="CHEBI:58080"/>
        <dbReference type="EC" id="3.5.1.26"/>
    </reaction>
</comment>
<comment type="subunit">
    <text evidence="1">Heterotetramer of two alpha and two beta chains arranged as a dimer of alpha/beta heterodimers.</text>
</comment>
<comment type="subcellular location">
    <subcellularLocation>
        <location>Lysosome</location>
    </subcellularLocation>
</comment>
<comment type="PTM">
    <text evidence="1 3">Cleaved into an alpha and beta chain by autocatalysis; this activates the enzyme (PubMed:8586423). The N-terminal residue of the beta subunit is responsible for the nucleophile hydrolase activity.</text>
</comment>
<comment type="PTM">
    <text evidence="1">N-glycosylated.</text>
</comment>
<comment type="similarity">
    <text evidence="5">Belongs to the Ntn-hydrolase family.</text>
</comment>
<accession>Q64191</accession>
<proteinExistence type="evidence at protein level"/>
<sequence length="346" mass="37022">MERKSNLSLLLLLLVLGMPLVRGSSPLPLVVNTWPFKNATEAAWWTLLSGGSALDAVENGCAVCEKEQCDGTVGFGGSPDEGGETTLDAMIMDGTAMDVGAVGGLRRIKNAIGVARRVLEHTTHTLLVGDSATKFAESMGFTNEDLSTKTSRDLHSDWLSRNCQPNYWRNVIPDPSKYCGPYKPSGFLKQSISPHKEEVDIHSHDTIGMVVIHKTGHTAAGTSTNGIKFKIPGRVGDSPIPGAGAYADDTAGAAAATGDGDTLLRFLPSYQAVEYMRGGDDPAIACQKVILRIQKYYPNFFGAVICASVNGSYGAACNKLPTFTQFSFMVSNSLHNEPTEKKVDCI</sequence>
<dbReference type="EC" id="3.5.1.26" evidence="3"/>
<dbReference type="EMBL" id="S81393">
    <property type="protein sequence ID" value="AAB36101.1"/>
    <property type="molecule type" value="mRNA"/>
</dbReference>
<dbReference type="CCDS" id="CCDS22304.1"/>
<dbReference type="RefSeq" id="NP_001005847.1">
    <property type="nucleotide sequence ID" value="NM_001005847.3"/>
</dbReference>
<dbReference type="SMR" id="Q64191"/>
<dbReference type="BioGRID" id="198019">
    <property type="interactions" value="12"/>
</dbReference>
<dbReference type="FunCoup" id="Q64191">
    <property type="interactions" value="985"/>
</dbReference>
<dbReference type="STRING" id="10090.ENSMUSP00000033920"/>
<dbReference type="MEROPS" id="T02.001"/>
<dbReference type="GlyCosmos" id="Q64191">
    <property type="glycosylation" value="2 sites, No reported glycans"/>
</dbReference>
<dbReference type="GlyGen" id="Q64191">
    <property type="glycosylation" value="2 sites"/>
</dbReference>
<dbReference type="PhosphoSitePlus" id="Q64191"/>
<dbReference type="CPTAC" id="non-CPTAC-3449"/>
<dbReference type="PaxDb" id="10090-ENSMUSP00000033920"/>
<dbReference type="PeptideAtlas" id="Q64191"/>
<dbReference type="ProteomicsDB" id="283187"/>
<dbReference type="Pumba" id="Q64191"/>
<dbReference type="Antibodypedia" id="28679">
    <property type="antibodies" value="155 antibodies from 22 providers"/>
</dbReference>
<dbReference type="DNASU" id="11593"/>
<dbReference type="Ensembl" id="ENSMUST00000033920.6">
    <property type="protein sequence ID" value="ENSMUSP00000033920.5"/>
    <property type="gene ID" value="ENSMUSG00000031521.6"/>
</dbReference>
<dbReference type="GeneID" id="11593"/>
<dbReference type="KEGG" id="mmu:11593"/>
<dbReference type="UCSC" id="uc009lrz.2">
    <property type="organism name" value="mouse"/>
</dbReference>
<dbReference type="AGR" id="MGI:104873"/>
<dbReference type="CTD" id="175"/>
<dbReference type="MGI" id="MGI:104873">
    <property type="gene designation" value="Aga"/>
</dbReference>
<dbReference type="VEuPathDB" id="HostDB:ENSMUSG00000031521"/>
<dbReference type="eggNOG" id="KOG1593">
    <property type="taxonomic scope" value="Eukaryota"/>
</dbReference>
<dbReference type="GeneTree" id="ENSGT00950000183045"/>
<dbReference type="HOGENOM" id="CLU_021603_0_0_1"/>
<dbReference type="InParanoid" id="Q64191"/>
<dbReference type="OMA" id="YKPIINI"/>
<dbReference type="OrthoDB" id="188713at2759"/>
<dbReference type="PhylomeDB" id="Q64191"/>
<dbReference type="TreeFam" id="TF300756"/>
<dbReference type="Reactome" id="R-MMU-6798695">
    <property type="pathway name" value="Neutrophil degranulation"/>
</dbReference>
<dbReference type="BioGRID-ORCS" id="11593">
    <property type="hits" value="3 hits in 77 CRISPR screens"/>
</dbReference>
<dbReference type="ChiTaRS" id="Aga">
    <property type="organism name" value="mouse"/>
</dbReference>
<dbReference type="PRO" id="PR:Q64191"/>
<dbReference type="Proteomes" id="UP000000589">
    <property type="component" value="Chromosome 8"/>
</dbReference>
<dbReference type="RNAct" id="Q64191">
    <property type="molecule type" value="protein"/>
</dbReference>
<dbReference type="Bgee" id="ENSMUSG00000031521">
    <property type="expression patterns" value="Expressed in vault of skull and 218 other cell types or tissues"/>
</dbReference>
<dbReference type="ExpressionAtlas" id="Q64191">
    <property type="expression patterns" value="baseline and differential"/>
</dbReference>
<dbReference type="GO" id="GO:0005783">
    <property type="term" value="C:endoplasmic reticulum"/>
    <property type="evidence" value="ECO:0007669"/>
    <property type="project" value="Ensembl"/>
</dbReference>
<dbReference type="GO" id="GO:0005615">
    <property type="term" value="C:extracellular space"/>
    <property type="evidence" value="ECO:0007669"/>
    <property type="project" value="Ensembl"/>
</dbReference>
<dbReference type="GO" id="GO:0005764">
    <property type="term" value="C:lysosome"/>
    <property type="evidence" value="ECO:0000314"/>
    <property type="project" value="MGI"/>
</dbReference>
<dbReference type="GO" id="GO:0003948">
    <property type="term" value="F:N4-(beta-N-acetylglucosaminyl)-L-asparaginase activity"/>
    <property type="evidence" value="ECO:0000314"/>
    <property type="project" value="MGI"/>
</dbReference>
<dbReference type="GO" id="GO:0008233">
    <property type="term" value="F:peptidase activity"/>
    <property type="evidence" value="ECO:0007669"/>
    <property type="project" value="UniProtKB-KW"/>
</dbReference>
<dbReference type="GO" id="GO:0006508">
    <property type="term" value="P:proteolysis"/>
    <property type="evidence" value="ECO:0007669"/>
    <property type="project" value="UniProtKB-KW"/>
</dbReference>
<dbReference type="CDD" id="cd04513">
    <property type="entry name" value="Glycosylasparaginase"/>
    <property type="match status" value="1"/>
</dbReference>
<dbReference type="FunFam" id="3.60.20.30:FF:000003">
    <property type="entry name" value="N(4)-(Beta-N-acetylglucosaminyl)-L-asparaginase isoform X1"/>
    <property type="match status" value="1"/>
</dbReference>
<dbReference type="Gene3D" id="3.60.20.30">
    <property type="entry name" value="(Glycosyl)asparaginase"/>
    <property type="match status" value="1"/>
</dbReference>
<dbReference type="InterPro" id="IPR029055">
    <property type="entry name" value="Ntn_hydrolases_N"/>
</dbReference>
<dbReference type="InterPro" id="IPR000246">
    <property type="entry name" value="Peptidase_T2"/>
</dbReference>
<dbReference type="PANTHER" id="PTHR10188">
    <property type="entry name" value="L-ASPARAGINASE"/>
    <property type="match status" value="1"/>
</dbReference>
<dbReference type="PANTHER" id="PTHR10188:SF6">
    <property type="entry name" value="N(4)-(BETA-N-ACETYLGLUCOSAMINYL)-L-ASPARAGINASE"/>
    <property type="match status" value="1"/>
</dbReference>
<dbReference type="Pfam" id="PF01112">
    <property type="entry name" value="Asparaginase_2"/>
    <property type="match status" value="1"/>
</dbReference>
<dbReference type="SUPFAM" id="SSF56235">
    <property type="entry name" value="N-terminal nucleophile aminohydrolases (Ntn hydrolases)"/>
    <property type="match status" value="1"/>
</dbReference>
<keyword id="KW-0068">Autocatalytic cleavage</keyword>
<keyword id="KW-1015">Disulfide bond</keyword>
<keyword id="KW-0325">Glycoprotein</keyword>
<keyword id="KW-0378">Hydrolase</keyword>
<keyword id="KW-0458">Lysosome</keyword>
<keyword id="KW-0645">Protease</keyword>
<keyword id="KW-1185">Reference proteome</keyword>
<keyword id="KW-0732">Signal</keyword>
<reference key="1">
    <citation type="journal article" date="1995" name="Genomics">
        <title>Molecular cloning, chromosomal assignment, and expression of the mouse aspartylglucosaminidase gene.</title>
        <authorList>
            <person name="Tenhunen K."/>
            <person name="Laan M."/>
            <person name="Manninen T."/>
            <person name="Palotie A."/>
            <person name="Peltonen L."/>
            <person name="Jalanko A."/>
        </authorList>
    </citation>
    <scope>NUCLEOTIDE SEQUENCE [MRNA]</scope>
    <scope>FUNCTION</scope>
    <scope>CATALYTIC ACTIVITY</scope>
    <scope>GLYCOSYLATION</scope>
    <scope>PROTEOLYTIC CLEAVAGE</scope>
</reference>
<reference key="2">
    <citation type="journal article" date="2010" name="Cell">
        <title>A tissue-specific atlas of mouse protein phosphorylation and expression.</title>
        <authorList>
            <person name="Huttlin E.L."/>
            <person name="Jedrychowski M.P."/>
            <person name="Elias J.E."/>
            <person name="Goswami T."/>
            <person name="Rad R."/>
            <person name="Beausoleil S.A."/>
            <person name="Villen J."/>
            <person name="Haas W."/>
            <person name="Sowa M.E."/>
            <person name="Gygi S.P."/>
        </authorList>
    </citation>
    <scope>IDENTIFICATION BY MASS SPECTROMETRY [LARGE SCALE ANALYSIS]</scope>
    <source>
        <tissue>Brain</tissue>
        <tissue>Brown adipose tissue</tissue>
        <tissue>Heart</tissue>
        <tissue>Kidney</tissue>
        <tissue>Liver</tissue>
        <tissue>Lung</tissue>
        <tissue>Pancreas</tissue>
        <tissue>Spleen</tissue>
        <tissue>Testis</tissue>
    </source>
</reference>
<protein>
    <recommendedName>
        <fullName>N(4)-(beta-N-acetylglucosaminyl)-L-asparaginase</fullName>
        <ecNumber evidence="3">3.5.1.26</ecNumber>
    </recommendedName>
    <alternativeName>
        <fullName evidence="4">Aspartylglucosaminidase</fullName>
        <shortName evidence="4">AGA</shortName>
    </alternativeName>
    <alternativeName>
        <fullName>Glycosylasparaginase</fullName>
    </alternativeName>
    <alternativeName>
        <fullName>N4-(N-acetyl-beta-glucosaminyl)-L-asparagine amidase</fullName>
    </alternativeName>
    <component>
        <recommendedName>
            <fullName>Glycosylasparaginase alpha chain</fullName>
        </recommendedName>
    </component>
    <component>
        <recommendedName>
            <fullName>Glycosylasparaginase beta chain</fullName>
        </recommendedName>
    </component>
</protein>
<name>ASPG_MOUSE</name>
<feature type="signal peptide" evidence="1">
    <location>
        <begin position="1"/>
        <end position="23"/>
    </location>
</feature>
<feature type="chain" id="PRO_0000002335" description="Glycosylasparaginase alpha chain">
    <location>
        <begin position="24"/>
        <end position="205"/>
    </location>
</feature>
<feature type="chain" id="PRO_0000002336" description="Glycosylasparaginase beta chain">
    <location>
        <begin position="206"/>
        <end position="346"/>
    </location>
</feature>
<feature type="active site" description="Nucleophile" evidence="1">
    <location>
        <position position="206"/>
    </location>
</feature>
<feature type="binding site" evidence="1">
    <location>
        <begin position="234"/>
        <end position="237"/>
    </location>
    <ligand>
        <name>substrate</name>
    </ligand>
</feature>
<feature type="binding site" evidence="1">
    <location>
        <begin position="257"/>
        <end position="260"/>
    </location>
    <ligand>
        <name>substrate</name>
    </ligand>
</feature>
<feature type="glycosylation site" description="N-linked (GlcNAc...) asparagine" evidence="2">
    <location>
        <position position="38"/>
    </location>
</feature>
<feature type="glycosylation site" description="N-linked (GlcNAc...) asparagine" evidence="2">
    <location>
        <position position="310"/>
    </location>
</feature>
<feature type="disulfide bond" evidence="1">
    <location>
        <begin position="64"/>
        <end position="69"/>
    </location>
</feature>
<feature type="disulfide bond" evidence="1">
    <location>
        <begin position="163"/>
        <end position="179"/>
    </location>
</feature>
<feature type="disulfide bond" evidence="1">
    <location>
        <begin position="286"/>
        <end position="306"/>
    </location>
</feature>
<feature type="disulfide bond" evidence="1">
    <location>
        <begin position="317"/>
        <end position="345"/>
    </location>
</feature>
<evidence type="ECO:0000250" key="1">
    <source>
        <dbReference type="UniProtKB" id="P20933"/>
    </source>
</evidence>
<evidence type="ECO:0000255" key="2"/>
<evidence type="ECO:0000269" key="3">
    <source>
    </source>
</evidence>
<evidence type="ECO:0000303" key="4">
    <source>
    </source>
</evidence>
<evidence type="ECO:0000305" key="5"/>